<protein>
    <recommendedName>
        <fullName evidence="4">Valerianol synthase TPS8</fullName>
        <ecNumber evidence="2">4.2.3.204</ecNumber>
    </recommendedName>
    <alternativeName>
        <fullName evidence="3">Terpene synthase 8</fullName>
        <shortName evidence="3">CsiTPS8</shortName>
    </alternativeName>
</protein>
<evidence type="ECO:0000250" key="1">
    <source>
        <dbReference type="UniProtKB" id="Q40577"/>
    </source>
</evidence>
<evidence type="ECO:0000269" key="2">
    <source>
    </source>
</evidence>
<evidence type="ECO:0000303" key="3">
    <source>
    </source>
</evidence>
<evidence type="ECO:0000305" key="4"/>
<organism>
    <name type="scientific">Camellia sinensis</name>
    <name type="common">Tea plant</name>
    <name type="synonym">Thea sinensis</name>
    <dbReference type="NCBI Taxonomy" id="4442"/>
    <lineage>
        <taxon>Eukaryota</taxon>
        <taxon>Viridiplantae</taxon>
        <taxon>Streptophyta</taxon>
        <taxon>Embryophyta</taxon>
        <taxon>Tracheophyta</taxon>
        <taxon>Spermatophyta</taxon>
        <taxon>Magnoliopsida</taxon>
        <taxon>eudicotyledons</taxon>
        <taxon>Gunneridae</taxon>
        <taxon>Pentapetalae</taxon>
        <taxon>asterids</taxon>
        <taxon>Ericales</taxon>
        <taxon>Theaceae</taxon>
        <taxon>Camellia</taxon>
    </lineage>
</organism>
<gene>
    <name evidence="3" type="primary">TPS8</name>
</gene>
<name>TPS8_CAMSI</name>
<dbReference type="EC" id="4.2.3.204" evidence="2"/>
<dbReference type="EMBL" id="KU892071">
    <property type="protein sequence ID" value="ANB66333.1"/>
    <property type="status" value="ALT_INIT"/>
    <property type="molecule type" value="mRNA"/>
</dbReference>
<dbReference type="SMR" id="A0A167V661"/>
<dbReference type="KEGG" id="ag:ANB66333"/>
<dbReference type="BioCyc" id="MetaCyc:MONOMER-20803"/>
<dbReference type="UniPathway" id="UPA00213"/>
<dbReference type="GO" id="GO:0016838">
    <property type="term" value="F:carbon-oxygen lyase activity, acting on phosphates"/>
    <property type="evidence" value="ECO:0000314"/>
    <property type="project" value="UniProtKB"/>
</dbReference>
<dbReference type="GO" id="GO:0000287">
    <property type="term" value="F:magnesium ion binding"/>
    <property type="evidence" value="ECO:0007669"/>
    <property type="project" value="InterPro"/>
</dbReference>
<dbReference type="GO" id="GO:0010333">
    <property type="term" value="F:terpene synthase activity"/>
    <property type="evidence" value="ECO:0007669"/>
    <property type="project" value="InterPro"/>
</dbReference>
<dbReference type="GO" id="GO:0016102">
    <property type="term" value="P:diterpenoid biosynthetic process"/>
    <property type="evidence" value="ECO:0007669"/>
    <property type="project" value="InterPro"/>
</dbReference>
<dbReference type="GO" id="GO:0016106">
    <property type="term" value="P:sesquiterpenoid biosynthetic process"/>
    <property type="evidence" value="ECO:0000314"/>
    <property type="project" value="UniProtKB"/>
</dbReference>
<dbReference type="CDD" id="cd00684">
    <property type="entry name" value="Terpene_cyclase_plant_C1"/>
    <property type="match status" value="1"/>
</dbReference>
<dbReference type="FunFam" id="1.10.600.10:FF:000007">
    <property type="entry name" value="Isoprene synthase, chloroplastic"/>
    <property type="match status" value="1"/>
</dbReference>
<dbReference type="FunFam" id="1.50.10.130:FF:000001">
    <property type="entry name" value="Isoprene synthase, chloroplastic"/>
    <property type="match status" value="1"/>
</dbReference>
<dbReference type="Gene3D" id="1.10.600.10">
    <property type="entry name" value="Farnesyl Diphosphate Synthase"/>
    <property type="match status" value="1"/>
</dbReference>
<dbReference type="Gene3D" id="1.50.10.130">
    <property type="entry name" value="Terpene synthase, N-terminal domain"/>
    <property type="match status" value="1"/>
</dbReference>
<dbReference type="InterPro" id="IPR008949">
    <property type="entry name" value="Isoprenoid_synthase_dom_sf"/>
</dbReference>
<dbReference type="InterPro" id="IPR034741">
    <property type="entry name" value="Terpene_cyclase-like_1_C"/>
</dbReference>
<dbReference type="InterPro" id="IPR044814">
    <property type="entry name" value="Terpene_cyclase_plant_C1"/>
</dbReference>
<dbReference type="InterPro" id="IPR001906">
    <property type="entry name" value="Terpene_synth_N"/>
</dbReference>
<dbReference type="InterPro" id="IPR036965">
    <property type="entry name" value="Terpene_synth_N_sf"/>
</dbReference>
<dbReference type="InterPro" id="IPR050148">
    <property type="entry name" value="Terpene_synthase-like"/>
</dbReference>
<dbReference type="InterPro" id="IPR005630">
    <property type="entry name" value="Terpene_synthase_metal-bd"/>
</dbReference>
<dbReference type="InterPro" id="IPR008930">
    <property type="entry name" value="Terpenoid_cyclase/PrenylTrfase"/>
</dbReference>
<dbReference type="PANTHER" id="PTHR31225:SF93">
    <property type="entry name" value="ALPHA-HUMULENE_(-)-(E)-BETA-CARYOPHYLLENE SYNTHASE"/>
    <property type="match status" value="1"/>
</dbReference>
<dbReference type="PANTHER" id="PTHR31225">
    <property type="entry name" value="OS04G0344100 PROTEIN-RELATED"/>
    <property type="match status" value="1"/>
</dbReference>
<dbReference type="Pfam" id="PF01397">
    <property type="entry name" value="Terpene_synth"/>
    <property type="match status" value="1"/>
</dbReference>
<dbReference type="Pfam" id="PF03936">
    <property type="entry name" value="Terpene_synth_C"/>
    <property type="match status" value="1"/>
</dbReference>
<dbReference type="SFLD" id="SFLDS00005">
    <property type="entry name" value="Isoprenoid_Synthase_Type_I"/>
    <property type="match status" value="1"/>
</dbReference>
<dbReference type="SFLD" id="SFLDG01019">
    <property type="entry name" value="Terpene_Cyclase_Like_1_C_Termi"/>
    <property type="match status" value="1"/>
</dbReference>
<dbReference type="SUPFAM" id="SSF48239">
    <property type="entry name" value="Terpenoid cyclases/Protein prenyltransferases"/>
    <property type="match status" value="1"/>
</dbReference>
<dbReference type="SUPFAM" id="SSF48576">
    <property type="entry name" value="Terpenoid synthases"/>
    <property type="match status" value="1"/>
</dbReference>
<feature type="chain" id="PRO_0000451725" description="Valerianol synthase TPS8">
    <location>
        <begin position="1"/>
        <end position="554"/>
    </location>
</feature>
<feature type="short sequence motif" description="DDXXD motif" evidence="4">
    <location>
        <begin position="288"/>
        <end position="292"/>
    </location>
</feature>
<feature type="binding site" evidence="1">
    <location>
        <position position="307"/>
    </location>
    <ligand>
        <name>Mg(2+)</name>
        <dbReference type="ChEBI" id="CHEBI:18420"/>
        <label>1</label>
    </ligand>
</feature>
<feature type="binding site" evidence="1">
    <location>
        <position position="307"/>
    </location>
    <ligand>
        <name>Mg(2+)</name>
        <dbReference type="ChEBI" id="CHEBI:18420"/>
        <label>2</label>
    </ligand>
</feature>
<feature type="binding site" evidence="1">
    <location>
        <position position="311"/>
    </location>
    <ligand>
        <name>Mg(2+)</name>
        <dbReference type="ChEBI" id="CHEBI:18420"/>
        <label>1</label>
    </ligand>
</feature>
<feature type="binding site" evidence="1">
    <location>
        <position position="311"/>
    </location>
    <ligand>
        <name>Mg(2+)</name>
        <dbReference type="ChEBI" id="CHEBI:18420"/>
        <label>2</label>
    </ligand>
</feature>
<feature type="binding site" evidence="1">
    <location>
        <position position="452"/>
    </location>
    <ligand>
        <name>Mg(2+)</name>
        <dbReference type="ChEBI" id="CHEBI:18420"/>
        <label>3</label>
    </ligand>
</feature>
<feature type="binding site" evidence="1">
    <location>
        <position position="456"/>
    </location>
    <ligand>
        <name>Mg(2+)</name>
        <dbReference type="ChEBI" id="CHEBI:18420"/>
        <label>3</label>
    </ligand>
</feature>
<feature type="binding site" evidence="1">
    <location>
        <position position="460"/>
    </location>
    <ligand>
        <name>Mg(2+)</name>
        <dbReference type="ChEBI" id="CHEBI:18420"/>
        <label>3</label>
    </ligand>
</feature>
<keyword id="KW-0456">Lyase</keyword>
<keyword id="KW-0460">Magnesium</keyword>
<keyword id="KW-0479">Metal-binding</keyword>
<accession>A0A167V661</accession>
<sequence length="554" mass="64105">MASSQVGDMVNGNAEPTRHLAKFPPSLWGDRFTSFTLDKQLWDKYGNEIEVLKEQVRSMVVAGGRKAAEQINLINVLERLGVSYHFEKEIEEQLEQLFAKFEDNEDYDLFTIALHFRIFRQHGYKMSCDVFNKFRDSNGEFKETVSNDVQGMLSLYEATYLKIRGEGFLDEAHAFTIAQLESLVGGPHLSSDLSEQVMHALKQSIHRGFPRLEAKHFISFYEKDASRNETLLRLAKLDFNQLQLSHREELCHIFRWWKELDLISKVPYARDRAVECFFWSTCAYYEPQHSVGRAVLTKIMLLLSVTDDTYDAYGTYDELKLYTNAVQRWDVSAMDELPDYMKALYRALLNVYDEVERDLAKQGRDYGVHHSKEAFKEIVRSYEIEAEWFKEGYVASFEEYMKNALVTSTGRLHTTSCFMGLEADVATTEAFEWILTKPKMVAASGAIGRLVDDVMSHDEEQERGHVATGLDCYMKQHGVSKQEAIVELYKMIENAWRDINEEMLKPTAISMKLLIRVLNLSRISDVVYKYVDGYTHPEIIKDHVISLFEDPIPM</sequence>
<comment type="function">
    <text evidence="2">Terpene synthase that catalyzes the biosynthesis of the terpene valerianol.</text>
</comment>
<comment type="catalytic activity">
    <reaction evidence="2">
        <text>(2E,6E)-farnesyl diphosphate + H2O = valerianol + diphosphate</text>
        <dbReference type="Rhea" id="RHEA:60424"/>
        <dbReference type="ChEBI" id="CHEBI:15377"/>
        <dbReference type="ChEBI" id="CHEBI:33019"/>
        <dbReference type="ChEBI" id="CHEBI:143779"/>
        <dbReference type="ChEBI" id="CHEBI:175763"/>
        <dbReference type="EC" id="4.2.3.204"/>
    </reaction>
    <physiologicalReaction direction="left-to-right" evidence="2">
        <dbReference type="Rhea" id="RHEA:60425"/>
    </physiologicalReaction>
</comment>
<comment type="cofactor">
    <cofactor evidence="1">
        <name>Mg(2+)</name>
        <dbReference type="ChEBI" id="CHEBI:18420"/>
    </cofactor>
    <text evidence="1">Binds 3 Mg(2+) ions per subunit.</text>
</comment>
<comment type="pathway">
    <text evidence="4">Secondary metabolite biosynthesis; terpenoid biosynthesis.</text>
</comment>
<comment type="domain">
    <text evidence="4">The Asp-Asp-Xaa-Xaa-Asp/Glu (DDXXD/E) motif is important for the catalytic activity, presumably through binding to Mg(2+).</text>
</comment>
<comment type="similarity">
    <text evidence="4">Belongs to the terpene synthase family.</text>
</comment>
<comment type="sequence caution" evidence="4">
    <conflict type="erroneous initiation">
        <sequence resource="EMBL-CDS" id="ANB66333"/>
    </conflict>
    <text>Extended N-terminus.</text>
</comment>
<reference key="1">
    <citation type="submission" date="2016-03" db="EMBL/GenBank/DDBJ databases">
        <title>Camellia sinensis terpene synthase (TPS8) mRNA.</title>
        <authorList>
            <person name="Fu J."/>
        </authorList>
    </citation>
    <scope>NUCLEOTIDE SEQUENCE [MRNA]</scope>
</reference>
<reference key="2">
    <citation type="journal article" date="2018" name="Sci. Rep.">
        <title>Identification of novel sesquiterpene synthase genes that mediate the biosynthesis of valerianol, which was an unknown ingredient of tea.</title>
        <authorList>
            <person name="Hattan J."/>
            <person name="Shindo K."/>
            <person name="Sasaki T."/>
            <person name="Ohno F."/>
            <person name="Tokuda H."/>
            <person name="Ishikawa K."/>
            <person name="Misawa N."/>
        </authorList>
    </citation>
    <scope>FUNCTION</scope>
    <scope>CATALYTIC ACTIVITY</scope>
</reference>
<proteinExistence type="evidence at protein level"/>